<organism>
    <name type="scientific">Methanoregula boonei (strain DSM 21154 / JCM 14090 / 6A8)</name>
    <dbReference type="NCBI Taxonomy" id="456442"/>
    <lineage>
        <taxon>Archaea</taxon>
        <taxon>Methanobacteriati</taxon>
        <taxon>Methanobacteriota</taxon>
        <taxon>Stenosarchaea group</taxon>
        <taxon>Methanomicrobia</taxon>
        <taxon>Methanomicrobiales</taxon>
        <taxon>Methanoregulaceae</taxon>
        <taxon>Methanoregula</taxon>
    </lineage>
</organism>
<name>AROA_METB6</name>
<evidence type="ECO:0000255" key="1">
    <source>
        <dbReference type="HAMAP-Rule" id="MF_00210"/>
    </source>
</evidence>
<reference key="1">
    <citation type="journal article" date="2015" name="Microbiology">
        <title>Genome of Methanoregula boonei 6A8 reveals adaptations to oligotrophic peatland environments.</title>
        <authorList>
            <person name="Braeuer S."/>
            <person name="Cadillo-Quiroz H."/>
            <person name="Kyrpides N."/>
            <person name="Woyke T."/>
            <person name="Goodwin L."/>
            <person name="Detter C."/>
            <person name="Podell S."/>
            <person name="Yavitt J.B."/>
            <person name="Zinder S.H."/>
        </authorList>
    </citation>
    <scope>NUCLEOTIDE SEQUENCE [LARGE SCALE GENOMIC DNA]</scope>
    <source>
        <strain>DSM 21154 / JCM 14090 / 6A8</strain>
    </source>
</reference>
<sequence>MIVTLPARSGIELSVTTPPSKSYTHRALIAAALAQGRSTIVRPLMADDTKLTIASLMKLGVAIHADQHNIMLEGCDGSFPNTPGTVLDLDNSGTSLRLLASAALLATYPVTLTGSARMQERPLGPLAHTLNDLGGMVIFTKKEGYPPVTIGGRLLGGTATIDGSQSSQFASSVMMAAPYSKGPVDLTVTGTPASQSYLDITAGVMTDFGAVIRREGYRRFLVSNCNHYTGRTFVVEGDYSSASYFFALAAICGGKVTVAGLAPDSVQGDRLFLDALQRMGCEVTYAHDGVTVENQGPLTGITINMSSAPDTVQTLCMVAAVARTPTIITGIGHLKFKESDRIAVTADRLRMLGGIVTAERDRIVIQPATLHGGRIDPVNDHRTAMSFAVLGLGIGGITITGAECVNKSFPGFWEILSKVME</sequence>
<gene>
    <name evidence="1" type="primary">aroA</name>
    <name type="ordered locus">Mboo_1562</name>
</gene>
<keyword id="KW-0028">Amino-acid biosynthesis</keyword>
<keyword id="KW-0057">Aromatic amino acid biosynthesis</keyword>
<keyword id="KW-0963">Cytoplasm</keyword>
<keyword id="KW-1185">Reference proteome</keyword>
<keyword id="KW-0808">Transferase</keyword>
<dbReference type="EC" id="2.5.1.19" evidence="1"/>
<dbReference type="EMBL" id="CP000780">
    <property type="protein sequence ID" value="ABS56079.1"/>
    <property type="molecule type" value="Genomic_DNA"/>
</dbReference>
<dbReference type="RefSeq" id="WP_012107121.1">
    <property type="nucleotide sequence ID" value="NC_009712.1"/>
</dbReference>
<dbReference type="SMR" id="A7I8L8"/>
<dbReference type="STRING" id="456442.Mboo_1562"/>
<dbReference type="GeneID" id="5410087"/>
<dbReference type="KEGG" id="mbn:Mboo_1562"/>
<dbReference type="eggNOG" id="arCOG04134">
    <property type="taxonomic scope" value="Archaea"/>
</dbReference>
<dbReference type="HOGENOM" id="CLU_024321_0_0_2"/>
<dbReference type="OrthoDB" id="43788at2157"/>
<dbReference type="UniPathway" id="UPA00053"/>
<dbReference type="Proteomes" id="UP000002408">
    <property type="component" value="Chromosome"/>
</dbReference>
<dbReference type="GO" id="GO:0005737">
    <property type="term" value="C:cytoplasm"/>
    <property type="evidence" value="ECO:0007669"/>
    <property type="project" value="UniProtKB-SubCell"/>
</dbReference>
<dbReference type="GO" id="GO:0003866">
    <property type="term" value="F:3-phosphoshikimate 1-carboxyvinyltransferase activity"/>
    <property type="evidence" value="ECO:0007669"/>
    <property type="project" value="UniProtKB-UniRule"/>
</dbReference>
<dbReference type="GO" id="GO:0008652">
    <property type="term" value="P:amino acid biosynthetic process"/>
    <property type="evidence" value="ECO:0007669"/>
    <property type="project" value="UniProtKB-KW"/>
</dbReference>
<dbReference type="GO" id="GO:0009073">
    <property type="term" value="P:aromatic amino acid family biosynthetic process"/>
    <property type="evidence" value="ECO:0007669"/>
    <property type="project" value="UniProtKB-KW"/>
</dbReference>
<dbReference type="GO" id="GO:0009423">
    <property type="term" value="P:chorismate biosynthetic process"/>
    <property type="evidence" value="ECO:0007669"/>
    <property type="project" value="UniProtKB-UniRule"/>
</dbReference>
<dbReference type="CDD" id="cd01556">
    <property type="entry name" value="EPSP_synthase"/>
    <property type="match status" value="1"/>
</dbReference>
<dbReference type="Gene3D" id="3.65.10.10">
    <property type="entry name" value="Enolpyruvate transferase domain"/>
    <property type="match status" value="2"/>
</dbReference>
<dbReference type="HAMAP" id="MF_00210">
    <property type="entry name" value="EPSP_synth"/>
    <property type="match status" value="1"/>
</dbReference>
<dbReference type="InterPro" id="IPR001986">
    <property type="entry name" value="Enolpyruvate_Tfrase_dom"/>
</dbReference>
<dbReference type="InterPro" id="IPR036968">
    <property type="entry name" value="Enolpyruvate_Tfrase_sf"/>
</dbReference>
<dbReference type="InterPro" id="IPR006264">
    <property type="entry name" value="EPSP_synthase"/>
</dbReference>
<dbReference type="InterPro" id="IPR023193">
    <property type="entry name" value="EPSP_synthase_CS"/>
</dbReference>
<dbReference type="InterPro" id="IPR013792">
    <property type="entry name" value="RNA3'P_cycl/enolpyr_Trfase_a/b"/>
</dbReference>
<dbReference type="NCBIfam" id="TIGR01356">
    <property type="entry name" value="aroA"/>
    <property type="match status" value="1"/>
</dbReference>
<dbReference type="PANTHER" id="PTHR21090">
    <property type="entry name" value="AROM/DEHYDROQUINATE SYNTHASE"/>
    <property type="match status" value="1"/>
</dbReference>
<dbReference type="PANTHER" id="PTHR21090:SF5">
    <property type="entry name" value="PENTAFUNCTIONAL AROM POLYPEPTIDE"/>
    <property type="match status" value="1"/>
</dbReference>
<dbReference type="Pfam" id="PF00275">
    <property type="entry name" value="EPSP_synthase"/>
    <property type="match status" value="1"/>
</dbReference>
<dbReference type="PIRSF" id="PIRSF000505">
    <property type="entry name" value="EPSPS"/>
    <property type="match status" value="1"/>
</dbReference>
<dbReference type="SUPFAM" id="SSF55205">
    <property type="entry name" value="EPT/RTPC-like"/>
    <property type="match status" value="1"/>
</dbReference>
<dbReference type="PROSITE" id="PS00885">
    <property type="entry name" value="EPSP_SYNTHASE_2"/>
    <property type="match status" value="1"/>
</dbReference>
<comment type="function">
    <text evidence="1">Catalyzes the transfer of the enolpyruvyl moiety of phosphoenolpyruvate (PEP) to the 5-hydroxyl of shikimate-3-phosphate (S3P) to produce enolpyruvyl shikimate-3-phosphate and inorganic phosphate.</text>
</comment>
<comment type="catalytic activity">
    <reaction evidence="1">
        <text>3-phosphoshikimate + phosphoenolpyruvate = 5-O-(1-carboxyvinyl)-3-phosphoshikimate + phosphate</text>
        <dbReference type="Rhea" id="RHEA:21256"/>
        <dbReference type="ChEBI" id="CHEBI:43474"/>
        <dbReference type="ChEBI" id="CHEBI:57701"/>
        <dbReference type="ChEBI" id="CHEBI:58702"/>
        <dbReference type="ChEBI" id="CHEBI:145989"/>
        <dbReference type="EC" id="2.5.1.19"/>
    </reaction>
    <physiologicalReaction direction="left-to-right" evidence="1">
        <dbReference type="Rhea" id="RHEA:21257"/>
    </physiologicalReaction>
</comment>
<comment type="pathway">
    <text evidence="1">Metabolic intermediate biosynthesis; chorismate biosynthesis.</text>
</comment>
<comment type="subunit">
    <text evidence="1">Monomer.</text>
</comment>
<comment type="subcellular location">
    <subcellularLocation>
        <location evidence="1">Cytoplasm</location>
    </subcellularLocation>
</comment>
<comment type="similarity">
    <text evidence="1">Belongs to the EPSP synthase family.</text>
</comment>
<accession>A7I8L8</accession>
<protein>
    <recommendedName>
        <fullName evidence="1">3-phosphoshikimate 1-carboxyvinyltransferase</fullName>
        <ecNumber evidence="1">2.5.1.19</ecNumber>
    </recommendedName>
    <alternativeName>
        <fullName evidence="1">5-enolpyruvylshikimate-3-phosphate synthase</fullName>
        <shortName evidence="1">EPSP synthase</shortName>
        <shortName evidence="1">EPSPS</shortName>
    </alternativeName>
</protein>
<proteinExistence type="inferred from homology"/>
<feature type="chain" id="PRO_1000099716" description="3-phosphoshikimate 1-carboxyvinyltransferase">
    <location>
        <begin position="1"/>
        <end position="421"/>
    </location>
</feature>
<feature type="active site" description="Proton acceptor" evidence="1">
    <location>
        <position position="310"/>
    </location>
</feature>
<feature type="binding site" evidence="1">
    <location>
        <position position="21"/>
    </location>
    <ligand>
        <name>3-phosphoshikimate</name>
        <dbReference type="ChEBI" id="CHEBI:145989"/>
    </ligand>
</feature>
<feature type="binding site" evidence="1">
    <location>
        <position position="21"/>
    </location>
    <ligand>
        <name>phosphoenolpyruvate</name>
        <dbReference type="ChEBI" id="CHEBI:58702"/>
    </ligand>
</feature>
<feature type="binding site" evidence="1">
    <location>
        <position position="22"/>
    </location>
    <ligand>
        <name>3-phosphoshikimate</name>
        <dbReference type="ChEBI" id="CHEBI:145989"/>
    </ligand>
</feature>
<feature type="binding site" evidence="1">
    <location>
        <position position="26"/>
    </location>
    <ligand>
        <name>3-phosphoshikimate</name>
        <dbReference type="ChEBI" id="CHEBI:145989"/>
    </ligand>
</feature>
<feature type="binding site" evidence="1">
    <location>
        <position position="93"/>
    </location>
    <ligand>
        <name>phosphoenolpyruvate</name>
        <dbReference type="ChEBI" id="CHEBI:58702"/>
    </ligand>
</feature>
<feature type="binding site" evidence="1">
    <location>
        <position position="121"/>
    </location>
    <ligand>
        <name>phosphoenolpyruvate</name>
        <dbReference type="ChEBI" id="CHEBI:58702"/>
    </ligand>
</feature>
<feature type="binding site" evidence="1">
    <location>
        <position position="166"/>
    </location>
    <ligand>
        <name>3-phosphoshikimate</name>
        <dbReference type="ChEBI" id="CHEBI:145989"/>
    </ligand>
</feature>
<feature type="binding site" evidence="1">
    <location>
        <position position="167"/>
    </location>
    <ligand>
        <name>3-phosphoshikimate</name>
        <dbReference type="ChEBI" id="CHEBI:145989"/>
    </ligand>
</feature>
<feature type="binding site" evidence="1">
    <location>
        <position position="168"/>
    </location>
    <ligand>
        <name>3-phosphoshikimate</name>
        <dbReference type="ChEBI" id="CHEBI:145989"/>
    </ligand>
</feature>
<feature type="binding site" evidence="1">
    <location>
        <position position="168"/>
    </location>
    <ligand>
        <name>phosphoenolpyruvate</name>
        <dbReference type="ChEBI" id="CHEBI:58702"/>
    </ligand>
</feature>
<feature type="binding site" evidence="1">
    <location>
        <position position="194"/>
    </location>
    <ligand>
        <name>3-phosphoshikimate</name>
        <dbReference type="ChEBI" id="CHEBI:145989"/>
    </ligand>
</feature>
<feature type="binding site" evidence="1">
    <location>
        <position position="310"/>
    </location>
    <ligand>
        <name>3-phosphoshikimate</name>
        <dbReference type="ChEBI" id="CHEBI:145989"/>
    </ligand>
</feature>
<feature type="binding site" evidence="1">
    <location>
        <position position="337"/>
    </location>
    <ligand>
        <name>3-phosphoshikimate</name>
        <dbReference type="ChEBI" id="CHEBI:145989"/>
    </ligand>
</feature>
<feature type="binding site" evidence="1">
    <location>
        <position position="341"/>
    </location>
    <ligand>
        <name>phosphoenolpyruvate</name>
        <dbReference type="ChEBI" id="CHEBI:58702"/>
    </ligand>
</feature>
<feature type="binding site" evidence="1">
    <location>
        <position position="382"/>
    </location>
    <ligand>
        <name>phosphoenolpyruvate</name>
        <dbReference type="ChEBI" id="CHEBI:58702"/>
    </ligand>
</feature>
<feature type="binding site" evidence="1">
    <location>
        <position position="407"/>
    </location>
    <ligand>
        <name>phosphoenolpyruvate</name>
        <dbReference type="ChEBI" id="CHEBI:58702"/>
    </ligand>
</feature>